<accession>O31541</accession>
<comment type="function">
    <text evidence="2 3">Negatively regulates yetM expression and its own expression (PubMed:19329649). Binds specifically to corresponding single sites in the divergent yetL and yetM promoter regions, with higher affinity to the yetM region (PubMed:19329649). Recognizes a 28-mer operator of double-stranded DNA that contains a palindromic sequence (PubMed:35367827).</text>
</comment>
<comment type="activity regulation">
    <text evidence="2 3">Binding to the yetM cis sequence is clearly inhibited by kaempferol, morin, apigenin and luteolin, slightly inhibited by quercetin and galangin, but no inhibition is observed with the other flavonoids (PubMed:19329649). Flavonoid binding may induce conformational changes and modulate interaction with DNA (PubMed:35367827).</text>
</comment>
<comment type="subunit">
    <text evidence="2 3">Homodimer (PubMed:19329649, PubMed:35367827). The N- and C-terminal helices from both subunits stabilize YetL dimer via extensive intersubunit interactions (PubMed:35367827).</text>
</comment>
<comment type="induction">
    <text evidence="2">Partially autorepressed.</text>
</comment>
<name>YETL_BACSU</name>
<proteinExistence type="evidence at protein level"/>
<organism>
    <name type="scientific">Bacillus subtilis (strain 168)</name>
    <dbReference type="NCBI Taxonomy" id="224308"/>
    <lineage>
        <taxon>Bacteria</taxon>
        <taxon>Bacillati</taxon>
        <taxon>Bacillota</taxon>
        <taxon>Bacilli</taxon>
        <taxon>Bacillales</taxon>
        <taxon>Bacillaceae</taxon>
        <taxon>Bacillus</taxon>
    </lineage>
</organism>
<sequence length="167" mass="19218">MELKHLPKYKHITEHAETYANIDAGSLELFLSLFDISKKMNHVMEHYFAGRGLSEGKFKILMLLFDAKDHRLSPTELAKRSNVTKATITGLLDGLARDGFVSRRHHTEDKRKISIELTTEGKARLEQFLPGHFSKISAVMENYSDEEKDMFVKMLGDLFERLSVFKD</sequence>
<dbReference type="EMBL" id="AL009126">
    <property type="protein sequence ID" value="CAB12541.1"/>
    <property type="molecule type" value="Genomic_DNA"/>
</dbReference>
<dbReference type="PIR" id="A69799">
    <property type="entry name" value="A69799"/>
</dbReference>
<dbReference type="RefSeq" id="WP_003233796.1">
    <property type="nucleotide sequence ID" value="NZ_OZ025638.1"/>
</dbReference>
<dbReference type="PDB" id="7WZE">
    <property type="method" value="X-ray"/>
    <property type="resolution" value="2.65 A"/>
    <property type="chains" value="A/Y=1-167"/>
</dbReference>
<dbReference type="PDBsum" id="7WZE"/>
<dbReference type="SMR" id="O31541"/>
<dbReference type="FunCoup" id="O31541">
    <property type="interactions" value="98"/>
</dbReference>
<dbReference type="STRING" id="224308.BSU07220"/>
<dbReference type="PaxDb" id="224308-BSU07220"/>
<dbReference type="EnsemblBacteria" id="CAB12541">
    <property type="protein sequence ID" value="CAB12541"/>
    <property type="gene ID" value="BSU_07220"/>
</dbReference>
<dbReference type="GeneID" id="938778"/>
<dbReference type="KEGG" id="bsu:BSU07220"/>
<dbReference type="PATRIC" id="fig|224308.179.peg.783"/>
<dbReference type="eggNOG" id="COG1846">
    <property type="taxonomic scope" value="Bacteria"/>
</dbReference>
<dbReference type="InParanoid" id="O31541"/>
<dbReference type="OrthoDB" id="162531at2"/>
<dbReference type="PhylomeDB" id="O31541"/>
<dbReference type="BioCyc" id="BSUB:BSU07220-MONOMER"/>
<dbReference type="Proteomes" id="UP000001570">
    <property type="component" value="Chromosome"/>
</dbReference>
<dbReference type="GO" id="GO:0003677">
    <property type="term" value="F:DNA binding"/>
    <property type="evidence" value="ECO:0007669"/>
    <property type="project" value="UniProtKB-KW"/>
</dbReference>
<dbReference type="GO" id="GO:0003700">
    <property type="term" value="F:DNA-binding transcription factor activity"/>
    <property type="evidence" value="ECO:0007669"/>
    <property type="project" value="InterPro"/>
</dbReference>
<dbReference type="GO" id="GO:0006355">
    <property type="term" value="P:regulation of DNA-templated transcription"/>
    <property type="evidence" value="ECO:0000318"/>
    <property type="project" value="GO_Central"/>
</dbReference>
<dbReference type="GO" id="GO:0006950">
    <property type="term" value="P:response to stress"/>
    <property type="evidence" value="ECO:0000318"/>
    <property type="project" value="GO_Central"/>
</dbReference>
<dbReference type="Gene3D" id="1.10.10.10">
    <property type="entry name" value="Winged helix-like DNA-binding domain superfamily/Winged helix DNA-binding domain"/>
    <property type="match status" value="1"/>
</dbReference>
<dbReference type="InterPro" id="IPR000835">
    <property type="entry name" value="HTH_MarR-typ"/>
</dbReference>
<dbReference type="InterPro" id="IPR023187">
    <property type="entry name" value="Tscrpt_reg_MarR-type_CS"/>
</dbReference>
<dbReference type="InterPro" id="IPR036388">
    <property type="entry name" value="WH-like_DNA-bd_sf"/>
</dbReference>
<dbReference type="InterPro" id="IPR036390">
    <property type="entry name" value="WH_DNA-bd_sf"/>
</dbReference>
<dbReference type="PANTHER" id="PTHR42756">
    <property type="entry name" value="TRANSCRIPTIONAL REGULATOR, MARR"/>
    <property type="match status" value="1"/>
</dbReference>
<dbReference type="PANTHER" id="PTHR42756:SF1">
    <property type="entry name" value="TRANSCRIPTIONAL REPRESSOR OF EMRAB OPERON"/>
    <property type="match status" value="1"/>
</dbReference>
<dbReference type="Pfam" id="PF01047">
    <property type="entry name" value="MarR"/>
    <property type="match status" value="1"/>
</dbReference>
<dbReference type="PRINTS" id="PR00598">
    <property type="entry name" value="HTHMARR"/>
</dbReference>
<dbReference type="SMART" id="SM00347">
    <property type="entry name" value="HTH_MARR"/>
    <property type="match status" value="1"/>
</dbReference>
<dbReference type="SUPFAM" id="SSF46785">
    <property type="entry name" value="Winged helix' DNA-binding domain"/>
    <property type="match status" value="1"/>
</dbReference>
<dbReference type="PROSITE" id="PS01117">
    <property type="entry name" value="HTH_MARR_1"/>
    <property type="match status" value="1"/>
</dbReference>
<dbReference type="PROSITE" id="PS50995">
    <property type="entry name" value="HTH_MARR_2"/>
    <property type="match status" value="1"/>
</dbReference>
<protein>
    <recommendedName>
        <fullName evidence="4">HTH-type transcriptional repressor YetL</fullName>
    </recommendedName>
</protein>
<reference key="1">
    <citation type="journal article" date="1997" name="Nature">
        <title>The complete genome sequence of the Gram-positive bacterium Bacillus subtilis.</title>
        <authorList>
            <person name="Kunst F."/>
            <person name="Ogasawara N."/>
            <person name="Moszer I."/>
            <person name="Albertini A.M."/>
            <person name="Alloni G."/>
            <person name="Azevedo V."/>
            <person name="Bertero M.G."/>
            <person name="Bessieres P."/>
            <person name="Bolotin A."/>
            <person name="Borchert S."/>
            <person name="Borriss R."/>
            <person name="Boursier L."/>
            <person name="Brans A."/>
            <person name="Braun M."/>
            <person name="Brignell S.C."/>
            <person name="Bron S."/>
            <person name="Brouillet S."/>
            <person name="Bruschi C.V."/>
            <person name="Caldwell B."/>
            <person name="Capuano V."/>
            <person name="Carter N.M."/>
            <person name="Choi S.-K."/>
            <person name="Codani J.-J."/>
            <person name="Connerton I.F."/>
            <person name="Cummings N.J."/>
            <person name="Daniel R.A."/>
            <person name="Denizot F."/>
            <person name="Devine K.M."/>
            <person name="Duesterhoeft A."/>
            <person name="Ehrlich S.D."/>
            <person name="Emmerson P.T."/>
            <person name="Entian K.-D."/>
            <person name="Errington J."/>
            <person name="Fabret C."/>
            <person name="Ferrari E."/>
            <person name="Foulger D."/>
            <person name="Fritz C."/>
            <person name="Fujita M."/>
            <person name="Fujita Y."/>
            <person name="Fuma S."/>
            <person name="Galizzi A."/>
            <person name="Galleron N."/>
            <person name="Ghim S.-Y."/>
            <person name="Glaser P."/>
            <person name="Goffeau A."/>
            <person name="Golightly E.J."/>
            <person name="Grandi G."/>
            <person name="Guiseppi G."/>
            <person name="Guy B.J."/>
            <person name="Haga K."/>
            <person name="Haiech J."/>
            <person name="Harwood C.R."/>
            <person name="Henaut A."/>
            <person name="Hilbert H."/>
            <person name="Holsappel S."/>
            <person name="Hosono S."/>
            <person name="Hullo M.-F."/>
            <person name="Itaya M."/>
            <person name="Jones L.-M."/>
            <person name="Joris B."/>
            <person name="Karamata D."/>
            <person name="Kasahara Y."/>
            <person name="Klaerr-Blanchard M."/>
            <person name="Klein C."/>
            <person name="Kobayashi Y."/>
            <person name="Koetter P."/>
            <person name="Koningstein G."/>
            <person name="Krogh S."/>
            <person name="Kumano M."/>
            <person name="Kurita K."/>
            <person name="Lapidus A."/>
            <person name="Lardinois S."/>
            <person name="Lauber J."/>
            <person name="Lazarevic V."/>
            <person name="Lee S.-M."/>
            <person name="Levine A."/>
            <person name="Liu H."/>
            <person name="Masuda S."/>
            <person name="Mauel C."/>
            <person name="Medigue C."/>
            <person name="Medina N."/>
            <person name="Mellado R.P."/>
            <person name="Mizuno M."/>
            <person name="Moestl D."/>
            <person name="Nakai S."/>
            <person name="Noback M."/>
            <person name="Noone D."/>
            <person name="O'Reilly M."/>
            <person name="Ogawa K."/>
            <person name="Ogiwara A."/>
            <person name="Oudega B."/>
            <person name="Park S.-H."/>
            <person name="Parro V."/>
            <person name="Pohl T.M."/>
            <person name="Portetelle D."/>
            <person name="Porwollik S."/>
            <person name="Prescott A.M."/>
            <person name="Presecan E."/>
            <person name="Pujic P."/>
            <person name="Purnelle B."/>
            <person name="Rapoport G."/>
            <person name="Rey M."/>
            <person name="Reynolds S."/>
            <person name="Rieger M."/>
            <person name="Rivolta C."/>
            <person name="Rocha E."/>
            <person name="Roche B."/>
            <person name="Rose M."/>
            <person name="Sadaie Y."/>
            <person name="Sato T."/>
            <person name="Scanlan E."/>
            <person name="Schleich S."/>
            <person name="Schroeter R."/>
            <person name="Scoffone F."/>
            <person name="Sekiguchi J."/>
            <person name="Sekowska A."/>
            <person name="Seror S.J."/>
            <person name="Serror P."/>
            <person name="Shin B.-S."/>
            <person name="Soldo B."/>
            <person name="Sorokin A."/>
            <person name="Tacconi E."/>
            <person name="Takagi T."/>
            <person name="Takahashi H."/>
            <person name="Takemaru K."/>
            <person name="Takeuchi M."/>
            <person name="Tamakoshi A."/>
            <person name="Tanaka T."/>
            <person name="Terpstra P."/>
            <person name="Tognoni A."/>
            <person name="Tosato V."/>
            <person name="Uchiyama S."/>
            <person name="Vandenbol M."/>
            <person name="Vannier F."/>
            <person name="Vassarotti A."/>
            <person name="Viari A."/>
            <person name="Wambutt R."/>
            <person name="Wedler E."/>
            <person name="Wedler H."/>
            <person name="Weitzenegger T."/>
            <person name="Winters P."/>
            <person name="Wipat A."/>
            <person name="Yamamoto H."/>
            <person name="Yamane K."/>
            <person name="Yasumoto K."/>
            <person name="Yata K."/>
            <person name="Yoshida K."/>
            <person name="Yoshikawa H.-F."/>
            <person name="Zumstein E."/>
            <person name="Yoshikawa H."/>
            <person name="Danchin A."/>
        </authorList>
    </citation>
    <scope>NUCLEOTIDE SEQUENCE [LARGE SCALE GENOMIC DNA]</scope>
    <source>
        <strain>168</strain>
    </source>
</reference>
<reference key="2">
    <citation type="journal article" date="2009" name="J. Bacteriol.">
        <title>Regulation of the Bacillus subtilis divergent yetL and yetM genes by a transcriptional repressor, YetL, in response to flavonoids.</title>
        <authorList>
            <person name="Hirooka K."/>
            <person name="Danjo Y."/>
            <person name="Hanano Y."/>
            <person name="Kunikane S."/>
            <person name="Matsuoka H."/>
            <person name="Tojo S."/>
            <person name="Fujita Y."/>
        </authorList>
    </citation>
    <scope>FUNCTION</scope>
    <scope>DNA-BINDING</scope>
    <scope>ACTIVITY REGULATION</scope>
    <scope>SUBUNIT</scope>
    <scope>TRANSCRIPTIONAL REGULATION</scope>
    <source>
        <strain>168</strain>
    </source>
</reference>
<reference evidence="5" key="3">
    <citation type="journal article" date="2022" name="Biochem. Biophys. Res. Commun.">
        <title>Structure-based molecular characterization of the YetL transcription factor from Bacillus subtilis.</title>
        <authorList>
            <person name="Park J."/>
            <person name="Kim J."/>
            <person name="Choi Z."/>
            <person name="Hong M."/>
        </authorList>
    </citation>
    <scope>X-RAY CRYSTALLOGRAPHY (2.65 ANGSTROMS)</scope>
    <scope>FUNCTION</scope>
    <scope>DNA-BINDING</scope>
    <scope>ACTIVITY REGULATION</scope>
    <scope>SUBUNIT</scope>
    <source>
        <strain>168</strain>
    </source>
</reference>
<evidence type="ECO:0000255" key="1">
    <source>
        <dbReference type="PROSITE-ProRule" id="PRU00345"/>
    </source>
</evidence>
<evidence type="ECO:0000269" key="2">
    <source>
    </source>
</evidence>
<evidence type="ECO:0000269" key="3">
    <source>
    </source>
</evidence>
<evidence type="ECO:0000305" key="4"/>
<evidence type="ECO:0007744" key="5">
    <source>
        <dbReference type="PDB" id="7WZE"/>
    </source>
</evidence>
<evidence type="ECO:0007829" key="6">
    <source>
        <dbReference type="PDB" id="7WZE"/>
    </source>
</evidence>
<keyword id="KW-0002">3D-structure</keyword>
<keyword id="KW-0238">DNA-binding</keyword>
<keyword id="KW-1185">Reference proteome</keyword>
<keyword id="KW-0678">Repressor</keyword>
<keyword id="KW-0804">Transcription</keyword>
<keyword id="KW-0805">Transcription regulation</keyword>
<feature type="chain" id="PRO_0000360526" description="HTH-type transcriptional repressor YetL">
    <location>
        <begin position="1"/>
        <end position="167"/>
    </location>
</feature>
<feature type="domain" description="HTH marR-type" evidence="1">
    <location>
        <begin position="26"/>
        <end position="160"/>
    </location>
</feature>
<feature type="DNA-binding region" description="H-T-H motif" evidence="1">
    <location>
        <begin position="74"/>
        <end position="97"/>
    </location>
</feature>
<feature type="helix" evidence="6">
    <location>
        <begin position="10"/>
        <end position="19"/>
    </location>
</feature>
<feature type="helix" evidence="6">
    <location>
        <begin position="24"/>
        <end position="49"/>
    </location>
</feature>
<feature type="turn" evidence="6">
    <location>
        <begin position="50"/>
        <end position="52"/>
    </location>
</feature>
<feature type="helix" evidence="6">
    <location>
        <begin position="55"/>
        <end position="66"/>
    </location>
</feature>
<feature type="helix" evidence="6">
    <location>
        <begin position="68"/>
        <end position="70"/>
    </location>
</feature>
<feature type="helix" evidence="6">
    <location>
        <begin position="74"/>
        <end position="81"/>
    </location>
</feature>
<feature type="helix" evidence="6">
    <location>
        <begin position="85"/>
        <end position="97"/>
    </location>
</feature>
<feature type="strand" evidence="6">
    <location>
        <begin position="100"/>
        <end position="104"/>
    </location>
</feature>
<feature type="strand" evidence="6">
    <location>
        <begin position="114"/>
        <end position="117"/>
    </location>
</feature>
<feature type="helix" evidence="6">
    <location>
        <begin position="119"/>
        <end position="139"/>
    </location>
</feature>
<feature type="turn" evidence="6">
    <location>
        <begin position="140"/>
        <end position="142"/>
    </location>
</feature>
<feature type="helix" evidence="6">
    <location>
        <begin position="145"/>
        <end position="161"/>
    </location>
</feature>
<feature type="helix" evidence="6">
    <location>
        <begin position="162"/>
        <end position="165"/>
    </location>
</feature>
<gene>
    <name type="primary">yetL</name>
    <name type="ordered locus">BSU07220</name>
</gene>